<accession>B3QNS6</accession>
<sequence>MTDRFQQLLASIKPVDMNLTSAVKAHLDDLTKPQGSLGRLEEIAMKYCIATGTSKPSLSKKKVFCFAGDHGVAAEGVSAFPAEVTPQMVYNMLGGGAAINVLSRHAGADLEVVDMGVNHDFAEHPMLRRCKVKHGSANMAEGPAMSIDETLQAIMAGAELAIEAREQGYELLATGEMGIANTTPATALYSVLLDMSVNAITGRGTGIDDERLHHKIAVIEKAIEVNRANLATPLEVLAALGGFEIAGICGLILGAASVGMPVVVDGFISSSAAVCAIKLSCKVSDYLFFSHLSNEQGHRAVMQKLGARPILDLDLRLGEGTGAAMAMQVIEASLKIYNEMATFSSAGVSGKND</sequence>
<name>COBT_CHLP8</name>
<proteinExistence type="inferred from homology"/>
<reference key="1">
    <citation type="submission" date="2008-06" db="EMBL/GenBank/DDBJ databases">
        <title>Complete sequence of Chlorobaculum parvum NCIB 8327.</title>
        <authorList>
            <consortium name="US DOE Joint Genome Institute"/>
            <person name="Lucas S."/>
            <person name="Copeland A."/>
            <person name="Lapidus A."/>
            <person name="Glavina del Rio T."/>
            <person name="Dalin E."/>
            <person name="Tice H."/>
            <person name="Bruce D."/>
            <person name="Goodwin L."/>
            <person name="Pitluck S."/>
            <person name="Schmutz J."/>
            <person name="Larimer F."/>
            <person name="Land M."/>
            <person name="Hauser L."/>
            <person name="Kyrpides N."/>
            <person name="Mikhailova N."/>
            <person name="Zhao F."/>
            <person name="Li T."/>
            <person name="Liu Z."/>
            <person name="Overmann J."/>
            <person name="Bryant D.A."/>
            <person name="Richardson P."/>
        </authorList>
    </citation>
    <scope>NUCLEOTIDE SEQUENCE [LARGE SCALE GENOMIC DNA]</scope>
    <source>
        <strain>DSM 263 / NCIMB 8327</strain>
    </source>
</reference>
<dbReference type="EC" id="2.4.2.21" evidence="1"/>
<dbReference type="EMBL" id="CP001099">
    <property type="protein sequence ID" value="ACF11579.1"/>
    <property type="molecule type" value="Genomic_DNA"/>
</dbReference>
<dbReference type="RefSeq" id="WP_012502412.1">
    <property type="nucleotide sequence ID" value="NC_011027.1"/>
</dbReference>
<dbReference type="SMR" id="B3QNS6"/>
<dbReference type="STRING" id="517417.Cpar_1173"/>
<dbReference type="KEGG" id="cpc:Cpar_1173"/>
<dbReference type="eggNOG" id="COG2038">
    <property type="taxonomic scope" value="Bacteria"/>
</dbReference>
<dbReference type="HOGENOM" id="CLU_002982_0_0_10"/>
<dbReference type="OrthoDB" id="9781491at2"/>
<dbReference type="UniPathway" id="UPA00061">
    <property type="reaction ID" value="UER00516"/>
</dbReference>
<dbReference type="Proteomes" id="UP000008811">
    <property type="component" value="Chromosome"/>
</dbReference>
<dbReference type="GO" id="GO:0008939">
    <property type="term" value="F:nicotinate-nucleotide-dimethylbenzimidazole phosphoribosyltransferase activity"/>
    <property type="evidence" value="ECO:0007669"/>
    <property type="project" value="UniProtKB-UniRule"/>
</dbReference>
<dbReference type="GO" id="GO:0009236">
    <property type="term" value="P:cobalamin biosynthetic process"/>
    <property type="evidence" value="ECO:0007669"/>
    <property type="project" value="UniProtKB-KW"/>
</dbReference>
<dbReference type="CDD" id="cd02439">
    <property type="entry name" value="DMB-PRT_CobT"/>
    <property type="match status" value="1"/>
</dbReference>
<dbReference type="FunFam" id="3.40.50.10210:FF:000001">
    <property type="entry name" value="Nicotinate-nucleotide--dimethylbenzimidazole phosphoribosyltransferase"/>
    <property type="match status" value="1"/>
</dbReference>
<dbReference type="Gene3D" id="1.10.1610.10">
    <property type="match status" value="1"/>
</dbReference>
<dbReference type="Gene3D" id="3.40.50.10210">
    <property type="match status" value="1"/>
</dbReference>
<dbReference type="HAMAP" id="MF_00230">
    <property type="entry name" value="CobT"/>
    <property type="match status" value="1"/>
</dbReference>
<dbReference type="InterPro" id="IPR003200">
    <property type="entry name" value="Nict_dMeBzImd_PRibTrfase"/>
</dbReference>
<dbReference type="InterPro" id="IPR017846">
    <property type="entry name" value="Nict_dMeBzImd_PRibTrfase_bact"/>
</dbReference>
<dbReference type="InterPro" id="IPR023195">
    <property type="entry name" value="Nict_dMeBzImd_PRibTrfase_N"/>
</dbReference>
<dbReference type="InterPro" id="IPR036087">
    <property type="entry name" value="Nict_dMeBzImd_PRibTrfase_sf"/>
</dbReference>
<dbReference type="NCBIfam" id="TIGR03160">
    <property type="entry name" value="cobT_DBIPRT"/>
    <property type="match status" value="1"/>
</dbReference>
<dbReference type="NCBIfam" id="NF000996">
    <property type="entry name" value="PRK00105.1"/>
    <property type="match status" value="1"/>
</dbReference>
<dbReference type="PANTHER" id="PTHR43463">
    <property type="entry name" value="NICOTINATE-NUCLEOTIDE--DIMETHYLBENZIMIDAZOLE PHOSPHORIBOSYLTRANSFERASE"/>
    <property type="match status" value="1"/>
</dbReference>
<dbReference type="PANTHER" id="PTHR43463:SF1">
    <property type="entry name" value="NICOTINATE-NUCLEOTIDE--DIMETHYLBENZIMIDAZOLE PHOSPHORIBOSYLTRANSFERASE"/>
    <property type="match status" value="1"/>
</dbReference>
<dbReference type="Pfam" id="PF02277">
    <property type="entry name" value="DBI_PRT"/>
    <property type="match status" value="1"/>
</dbReference>
<dbReference type="SUPFAM" id="SSF52733">
    <property type="entry name" value="Nicotinate mononucleotide:5,6-dimethylbenzimidazole phosphoribosyltransferase (CobT)"/>
    <property type="match status" value="1"/>
</dbReference>
<organism>
    <name type="scientific">Chlorobaculum parvum (strain DSM 263 / NCIMB 8327)</name>
    <name type="common">Chlorobium vibrioforme subsp. thiosulfatophilum</name>
    <dbReference type="NCBI Taxonomy" id="517417"/>
    <lineage>
        <taxon>Bacteria</taxon>
        <taxon>Pseudomonadati</taxon>
        <taxon>Chlorobiota</taxon>
        <taxon>Chlorobiia</taxon>
        <taxon>Chlorobiales</taxon>
        <taxon>Chlorobiaceae</taxon>
        <taxon>Chlorobaculum</taxon>
    </lineage>
</organism>
<gene>
    <name evidence="1" type="primary">cobT</name>
    <name type="ordered locus">Cpar_1173</name>
</gene>
<comment type="function">
    <text evidence="1">Catalyzes the synthesis of alpha-ribazole-5'-phosphate from nicotinate mononucleotide (NAMN) and 5,6-dimethylbenzimidazole (DMB).</text>
</comment>
<comment type="catalytic activity">
    <reaction evidence="1">
        <text>5,6-dimethylbenzimidazole + nicotinate beta-D-ribonucleotide = alpha-ribazole 5'-phosphate + nicotinate + H(+)</text>
        <dbReference type="Rhea" id="RHEA:11196"/>
        <dbReference type="ChEBI" id="CHEBI:15378"/>
        <dbReference type="ChEBI" id="CHEBI:15890"/>
        <dbReference type="ChEBI" id="CHEBI:32544"/>
        <dbReference type="ChEBI" id="CHEBI:57502"/>
        <dbReference type="ChEBI" id="CHEBI:57918"/>
        <dbReference type="EC" id="2.4.2.21"/>
    </reaction>
</comment>
<comment type="pathway">
    <text evidence="1">Nucleoside biosynthesis; alpha-ribazole biosynthesis; alpha-ribazole from 5,6-dimethylbenzimidazole: step 1/2.</text>
</comment>
<comment type="similarity">
    <text evidence="1">Belongs to the CobT family.</text>
</comment>
<keyword id="KW-0169">Cobalamin biosynthesis</keyword>
<keyword id="KW-0328">Glycosyltransferase</keyword>
<keyword id="KW-0808">Transferase</keyword>
<evidence type="ECO:0000255" key="1">
    <source>
        <dbReference type="HAMAP-Rule" id="MF_00230"/>
    </source>
</evidence>
<protein>
    <recommendedName>
        <fullName evidence="1">Nicotinate-nucleotide--dimethylbenzimidazole phosphoribosyltransferase</fullName>
        <shortName evidence="1">NN:DBI PRT</shortName>
        <ecNumber evidence="1">2.4.2.21</ecNumber>
    </recommendedName>
    <alternativeName>
        <fullName evidence="1">N(1)-alpha-phosphoribosyltransferase</fullName>
    </alternativeName>
</protein>
<feature type="chain" id="PRO_1000100459" description="Nicotinate-nucleotide--dimethylbenzimidazole phosphoribosyltransferase">
    <location>
        <begin position="1"/>
        <end position="353"/>
    </location>
</feature>
<feature type="active site" description="Proton acceptor" evidence="1">
    <location>
        <position position="319"/>
    </location>
</feature>